<dbReference type="EMBL" id="AJ938182">
    <property type="protein sequence ID" value="CAI80186.1"/>
    <property type="molecule type" value="Genomic_DNA"/>
</dbReference>
<dbReference type="RefSeq" id="WP_000090315.1">
    <property type="nucleotide sequence ID" value="NC_007622.1"/>
</dbReference>
<dbReference type="SMR" id="Q2YSB4"/>
<dbReference type="KEGG" id="sab:SAB0498"/>
<dbReference type="HOGENOM" id="CLU_002794_4_1_9"/>
<dbReference type="GO" id="GO:0005737">
    <property type="term" value="C:cytoplasm"/>
    <property type="evidence" value="ECO:0007669"/>
    <property type="project" value="UniProtKB-SubCell"/>
</dbReference>
<dbReference type="GO" id="GO:0005525">
    <property type="term" value="F:GTP binding"/>
    <property type="evidence" value="ECO:0007669"/>
    <property type="project" value="UniProtKB-UniRule"/>
</dbReference>
<dbReference type="GO" id="GO:0003924">
    <property type="term" value="F:GTPase activity"/>
    <property type="evidence" value="ECO:0007669"/>
    <property type="project" value="InterPro"/>
</dbReference>
<dbReference type="GO" id="GO:0003746">
    <property type="term" value="F:translation elongation factor activity"/>
    <property type="evidence" value="ECO:0007669"/>
    <property type="project" value="UniProtKB-UniRule"/>
</dbReference>
<dbReference type="GO" id="GO:0032790">
    <property type="term" value="P:ribosome disassembly"/>
    <property type="evidence" value="ECO:0007669"/>
    <property type="project" value="TreeGrafter"/>
</dbReference>
<dbReference type="CDD" id="cd01886">
    <property type="entry name" value="EF-G"/>
    <property type="match status" value="1"/>
</dbReference>
<dbReference type="CDD" id="cd16262">
    <property type="entry name" value="EFG_III"/>
    <property type="match status" value="1"/>
</dbReference>
<dbReference type="CDD" id="cd01434">
    <property type="entry name" value="EFG_mtEFG1_IV"/>
    <property type="match status" value="1"/>
</dbReference>
<dbReference type="CDD" id="cd03713">
    <property type="entry name" value="EFG_mtEFG_C"/>
    <property type="match status" value="1"/>
</dbReference>
<dbReference type="CDD" id="cd04088">
    <property type="entry name" value="EFG_mtEFG_II"/>
    <property type="match status" value="1"/>
</dbReference>
<dbReference type="FunFam" id="2.40.30.10:FF:000006">
    <property type="entry name" value="Elongation factor G"/>
    <property type="match status" value="1"/>
</dbReference>
<dbReference type="FunFam" id="3.30.230.10:FF:000003">
    <property type="entry name" value="Elongation factor G"/>
    <property type="match status" value="1"/>
</dbReference>
<dbReference type="FunFam" id="3.30.70.240:FF:000001">
    <property type="entry name" value="Elongation factor G"/>
    <property type="match status" value="1"/>
</dbReference>
<dbReference type="FunFam" id="3.30.70.870:FF:000001">
    <property type="entry name" value="Elongation factor G"/>
    <property type="match status" value="1"/>
</dbReference>
<dbReference type="FunFam" id="3.40.50.300:FF:000029">
    <property type="entry name" value="Elongation factor G"/>
    <property type="match status" value="1"/>
</dbReference>
<dbReference type="Gene3D" id="3.30.230.10">
    <property type="match status" value="1"/>
</dbReference>
<dbReference type="Gene3D" id="3.30.70.240">
    <property type="match status" value="1"/>
</dbReference>
<dbReference type="Gene3D" id="3.30.70.870">
    <property type="entry name" value="Elongation Factor G (Translational Gtpase), domain 3"/>
    <property type="match status" value="1"/>
</dbReference>
<dbReference type="Gene3D" id="3.40.50.300">
    <property type="entry name" value="P-loop containing nucleotide triphosphate hydrolases"/>
    <property type="match status" value="1"/>
</dbReference>
<dbReference type="Gene3D" id="2.40.30.10">
    <property type="entry name" value="Translation factors"/>
    <property type="match status" value="1"/>
</dbReference>
<dbReference type="HAMAP" id="MF_00054_B">
    <property type="entry name" value="EF_G_EF_2_B"/>
    <property type="match status" value="1"/>
</dbReference>
<dbReference type="InterPro" id="IPR041095">
    <property type="entry name" value="EFG_II"/>
</dbReference>
<dbReference type="InterPro" id="IPR009022">
    <property type="entry name" value="EFG_III"/>
</dbReference>
<dbReference type="InterPro" id="IPR035647">
    <property type="entry name" value="EFG_III/V"/>
</dbReference>
<dbReference type="InterPro" id="IPR047872">
    <property type="entry name" value="EFG_IV"/>
</dbReference>
<dbReference type="InterPro" id="IPR035649">
    <property type="entry name" value="EFG_V"/>
</dbReference>
<dbReference type="InterPro" id="IPR000640">
    <property type="entry name" value="EFG_V-like"/>
</dbReference>
<dbReference type="InterPro" id="IPR004161">
    <property type="entry name" value="EFTu-like_2"/>
</dbReference>
<dbReference type="InterPro" id="IPR031157">
    <property type="entry name" value="G_TR_CS"/>
</dbReference>
<dbReference type="InterPro" id="IPR027417">
    <property type="entry name" value="P-loop_NTPase"/>
</dbReference>
<dbReference type="InterPro" id="IPR020568">
    <property type="entry name" value="Ribosomal_Su5_D2-typ_SF"/>
</dbReference>
<dbReference type="InterPro" id="IPR014721">
    <property type="entry name" value="Ribsml_uS5_D2-typ_fold_subgr"/>
</dbReference>
<dbReference type="InterPro" id="IPR005225">
    <property type="entry name" value="Small_GTP-bd"/>
</dbReference>
<dbReference type="InterPro" id="IPR000795">
    <property type="entry name" value="T_Tr_GTP-bd_dom"/>
</dbReference>
<dbReference type="InterPro" id="IPR009000">
    <property type="entry name" value="Transl_B-barrel_sf"/>
</dbReference>
<dbReference type="InterPro" id="IPR004540">
    <property type="entry name" value="Transl_elong_EFG/EF2"/>
</dbReference>
<dbReference type="InterPro" id="IPR005517">
    <property type="entry name" value="Transl_elong_EFG/EF2_IV"/>
</dbReference>
<dbReference type="NCBIfam" id="TIGR00484">
    <property type="entry name" value="EF-G"/>
    <property type="match status" value="1"/>
</dbReference>
<dbReference type="NCBIfam" id="NF009379">
    <property type="entry name" value="PRK12740.1-3"/>
    <property type="match status" value="1"/>
</dbReference>
<dbReference type="NCBIfam" id="NF009381">
    <property type="entry name" value="PRK12740.1-5"/>
    <property type="match status" value="1"/>
</dbReference>
<dbReference type="NCBIfam" id="TIGR00231">
    <property type="entry name" value="small_GTP"/>
    <property type="match status" value="1"/>
</dbReference>
<dbReference type="PANTHER" id="PTHR43261:SF1">
    <property type="entry name" value="RIBOSOME-RELEASING FACTOR 2, MITOCHONDRIAL"/>
    <property type="match status" value="1"/>
</dbReference>
<dbReference type="PANTHER" id="PTHR43261">
    <property type="entry name" value="TRANSLATION ELONGATION FACTOR G-RELATED"/>
    <property type="match status" value="1"/>
</dbReference>
<dbReference type="Pfam" id="PF00679">
    <property type="entry name" value="EFG_C"/>
    <property type="match status" value="1"/>
</dbReference>
<dbReference type="Pfam" id="PF14492">
    <property type="entry name" value="EFG_III"/>
    <property type="match status" value="1"/>
</dbReference>
<dbReference type="Pfam" id="PF03764">
    <property type="entry name" value="EFG_IV"/>
    <property type="match status" value="1"/>
</dbReference>
<dbReference type="Pfam" id="PF00009">
    <property type="entry name" value="GTP_EFTU"/>
    <property type="match status" value="1"/>
</dbReference>
<dbReference type="Pfam" id="PF03144">
    <property type="entry name" value="GTP_EFTU_D2"/>
    <property type="match status" value="1"/>
</dbReference>
<dbReference type="PRINTS" id="PR00315">
    <property type="entry name" value="ELONGATNFCT"/>
</dbReference>
<dbReference type="SMART" id="SM00838">
    <property type="entry name" value="EFG_C"/>
    <property type="match status" value="1"/>
</dbReference>
<dbReference type="SMART" id="SM00889">
    <property type="entry name" value="EFG_IV"/>
    <property type="match status" value="1"/>
</dbReference>
<dbReference type="SUPFAM" id="SSF54980">
    <property type="entry name" value="EF-G C-terminal domain-like"/>
    <property type="match status" value="2"/>
</dbReference>
<dbReference type="SUPFAM" id="SSF52540">
    <property type="entry name" value="P-loop containing nucleoside triphosphate hydrolases"/>
    <property type="match status" value="1"/>
</dbReference>
<dbReference type="SUPFAM" id="SSF54211">
    <property type="entry name" value="Ribosomal protein S5 domain 2-like"/>
    <property type="match status" value="1"/>
</dbReference>
<dbReference type="SUPFAM" id="SSF50447">
    <property type="entry name" value="Translation proteins"/>
    <property type="match status" value="1"/>
</dbReference>
<dbReference type="PROSITE" id="PS00301">
    <property type="entry name" value="G_TR_1"/>
    <property type="match status" value="1"/>
</dbReference>
<dbReference type="PROSITE" id="PS51722">
    <property type="entry name" value="G_TR_2"/>
    <property type="match status" value="1"/>
</dbReference>
<name>EFG_STAAB</name>
<accession>Q2YSB4</accession>
<proteinExistence type="inferred from homology"/>
<protein>
    <recommendedName>
        <fullName evidence="2">Elongation factor G</fullName>
        <shortName evidence="2">EF-G</shortName>
    </recommendedName>
</protein>
<gene>
    <name evidence="2" type="primary">fusA</name>
    <name type="ordered locus">SAB0498</name>
</gene>
<organism>
    <name type="scientific">Staphylococcus aureus (strain bovine RF122 / ET3-1)</name>
    <dbReference type="NCBI Taxonomy" id="273036"/>
    <lineage>
        <taxon>Bacteria</taxon>
        <taxon>Bacillati</taxon>
        <taxon>Bacillota</taxon>
        <taxon>Bacilli</taxon>
        <taxon>Bacillales</taxon>
        <taxon>Staphylococcaceae</taxon>
        <taxon>Staphylococcus</taxon>
    </lineage>
</organism>
<comment type="function">
    <text evidence="2">Catalyzes the GTP-dependent ribosomal translocation step during translation elongation. During this step, the ribosome changes from the pre-translocational (PRE) to the post-translocational (POST) state as the newly formed A-site-bound peptidyl-tRNA and P-site-bound deacylated tRNA move to the P and E sites, respectively. Catalyzes the coordinated movement of the two tRNA molecules, the mRNA and conformational changes in the ribosome.</text>
</comment>
<comment type="subcellular location">
    <subcellularLocation>
        <location evidence="2">Cytoplasm</location>
    </subcellularLocation>
</comment>
<comment type="similarity">
    <text evidence="2">Belongs to the TRAFAC class translation factor GTPase superfamily. Classic translation factor GTPase family. EF-G/EF-2 subfamily.</text>
</comment>
<sequence>MAREFSLEKTRNIGIMAHIDAGKTTTTERILYYTGRIHKIGETHEGASQMDWMEQEQDRGITITSAATTAAWEGHRVNIIDTPGHVDFTVEVERSLRVLDGAVTVLDAQSGVEPQTETVWRQATTYGVPRIVFVNKMDKLGANFEYSVSTLHDRLQANAAPIQLPIGAEDEFEAIIDLVEMKCFKYTNDLGTEIEEIEIPEDHLDRAEEARASLIEAVAETSDELMEKYLGDEEISVSELKEAIRQATTNVEFYPVLCGTAFKNKGVQLMLDAVIDYLPSPLDVKPIIGHRASNPEEEVIAKADDSAEFAALAFKVMTDPYVGKLTFFRVYSGTMTSGSYVKNSTKGKRERVGRLLQMHANSRQEIDTVYSGDIAAAVGLKDTGTGDTLCGEKNDIILESMEFPEPVIHLSVEPKSKADQDKMTQALVKLQEEDPTFHAHTDEETGQVIIGGMGELHLDILVDRMKKEFNVECNVGAPMVSYRETFKSSAQVQGKFSRQSGGRGQYGDVHIEFTPNETGAGFEFENAIVGGVVPREYIPSVEAGLKDAMENGVLAGYPLIDVKAKLYDGSYHDVDSSEMAFKIAASLALKEAAKKCDPVILEPMMKVTIEMPEEYMGDIMGDVTSRRGRVDGMEPRGNAQVVNAYVPLSEMFGYATSLRSNTQGRGTYTMYFDHYAEVPKSIAEDIIKKNKGE</sequence>
<keyword id="KW-0963">Cytoplasm</keyword>
<keyword id="KW-0251">Elongation factor</keyword>
<keyword id="KW-0342">GTP-binding</keyword>
<keyword id="KW-0547">Nucleotide-binding</keyword>
<keyword id="KW-0648">Protein biosynthesis</keyword>
<evidence type="ECO:0000250" key="1"/>
<evidence type="ECO:0000255" key="2">
    <source>
        <dbReference type="HAMAP-Rule" id="MF_00054"/>
    </source>
</evidence>
<feature type="initiator methionine" description="Removed" evidence="1">
    <location>
        <position position="1"/>
    </location>
</feature>
<feature type="chain" id="PRO_0000263514" description="Elongation factor G">
    <location>
        <begin position="2"/>
        <end position="693"/>
    </location>
</feature>
<feature type="domain" description="tr-type G">
    <location>
        <begin position="8"/>
        <end position="282"/>
    </location>
</feature>
<feature type="binding site" evidence="2">
    <location>
        <begin position="17"/>
        <end position="24"/>
    </location>
    <ligand>
        <name>GTP</name>
        <dbReference type="ChEBI" id="CHEBI:37565"/>
    </ligand>
</feature>
<feature type="binding site" evidence="2">
    <location>
        <begin position="81"/>
        <end position="85"/>
    </location>
    <ligand>
        <name>GTP</name>
        <dbReference type="ChEBI" id="CHEBI:37565"/>
    </ligand>
</feature>
<feature type="binding site" evidence="2">
    <location>
        <begin position="135"/>
        <end position="138"/>
    </location>
    <ligand>
        <name>GTP</name>
        <dbReference type="ChEBI" id="CHEBI:37565"/>
    </ligand>
</feature>
<reference key="1">
    <citation type="journal article" date="2007" name="PLoS ONE">
        <title>Molecular correlates of host specialization in Staphylococcus aureus.</title>
        <authorList>
            <person name="Herron-Olson L."/>
            <person name="Fitzgerald J.R."/>
            <person name="Musser J.M."/>
            <person name="Kapur V."/>
        </authorList>
    </citation>
    <scope>NUCLEOTIDE SEQUENCE [LARGE SCALE GENOMIC DNA]</scope>
    <source>
        <strain>bovine RF122 / ET3-1</strain>
    </source>
</reference>